<gene>
    <name evidence="1" type="primary">glmU</name>
    <name type="ordered locus">str0563</name>
</gene>
<sequence>MSHYAIILAAGKGTRMKSDLPKVLHKVSGITMLEHVFRAVSVIEPAKNVTVIGHKAELVREVLDGQSAFTMQTEQLGTGHAVMMAEEELAGLEGQTLVIAGDTPLITGESLKNLIDFHVNHKNVATILTATADNPFGYGRIIRNENGEVTKIVEQKDANEFEQQVKEINTGTYVFDNKRLFEALKNINTNNAQGEYYLTDVISIFRENGEKVGAYTLRDFEESLGVNDRVALATAEDVMRRRINKAHMINGVTFQNPNATYIDVDVEIAPDVVIEANVTLKGQTKVGAESVLTNGTYIVDSTIGANTVITNSMIEHSVVEKGATVGPFAHIRPDSMLKEGVHIGNFVEVKGSTIGENTKAGHLTYIGNAEVGSDVNFGAGTITVNYDGQHKFKTQIANNAFIGSNSTLIAPLEIGDNALTAAGSTITDNVPADSVAIGRSRQVNKEGYAIKKPHHPSQQK</sequence>
<comment type="function">
    <text evidence="1">Catalyzes the last two sequential reactions in the de novo biosynthetic pathway for UDP-N-acetylglucosamine (UDP-GlcNAc). The C-terminal domain catalyzes the transfer of acetyl group from acetyl coenzyme A to glucosamine-1-phosphate (GlcN-1-P) to produce N-acetylglucosamine-1-phosphate (GlcNAc-1-P), which is converted into UDP-GlcNAc by the transfer of uridine 5-monophosphate (from uridine 5-triphosphate), a reaction catalyzed by the N-terminal domain.</text>
</comment>
<comment type="catalytic activity">
    <reaction evidence="1">
        <text>alpha-D-glucosamine 1-phosphate + acetyl-CoA = N-acetyl-alpha-D-glucosamine 1-phosphate + CoA + H(+)</text>
        <dbReference type="Rhea" id="RHEA:13725"/>
        <dbReference type="ChEBI" id="CHEBI:15378"/>
        <dbReference type="ChEBI" id="CHEBI:57287"/>
        <dbReference type="ChEBI" id="CHEBI:57288"/>
        <dbReference type="ChEBI" id="CHEBI:57776"/>
        <dbReference type="ChEBI" id="CHEBI:58516"/>
        <dbReference type="EC" id="2.3.1.157"/>
    </reaction>
</comment>
<comment type="catalytic activity">
    <reaction evidence="1">
        <text>N-acetyl-alpha-D-glucosamine 1-phosphate + UTP + H(+) = UDP-N-acetyl-alpha-D-glucosamine + diphosphate</text>
        <dbReference type="Rhea" id="RHEA:13509"/>
        <dbReference type="ChEBI" id="CHEBI:15378"/>
        <dbReference type="ChEBI" id="CHEBI:33019"/>
        <dbReference type="ChEBI" id="CHEBI:46398"/>
        <dbReference type="ChEBI" id="CHEBI:57705"/>
        <dbReference type="ChEBI" id="CHEBI:57776"/>
        <dbReference type="EC" id="2.7.7.23"/>
    </reaction>
</comment>
<comment type="cofactor">
    <cofactor evidence="1">
        <name>Mg(2+)</name>
        <dbReference type="ChEBI" id="CHEBI:18420"/>
    </cofactor>
    <text evidence="1">Binds 1 Mg(2+) ion per subunit.</text>
</comment>
<comment type="pathway">
    <text evidence="1">Nucleotide-sugar biosynthesis; UDP-N-acetyl-alpha-D-glucosamine biosynthesis; N-acetyl-alpha-D-glucosamine 1-phosphate from alpha-D-glucosamine 6-phosphate (route II): step 2/2.</text>
</comment>
<comment type="pathway">
    <text evidence="1">Nucleotide-sugar biosynthesis; UDP-N-acetyl-alpha-D-glucosamine biosynthesis; UDP-N-acetyl-alpha-D-glucosamine from N-acetyl-alpha-D-glucosamine 1-phosphate: step 1/1.</text>
</comment>
<comment type="pathway">
    <text evidence="1">Bacterial outer membrane biogenesis; LPS lipid A biosynthesis.</text>
</comment>
<comment type="subunit">
    <text evidence="1">Homotrimer.</text>
</comment>
<comment type="subcellular location">
    <subcellularLocation>
        <location evidence="1">Cytoplasm</location>
    </subcellularLocation>
</comment>
<comment type="similarity">
    <text evidence="1">In the N-terminal section; belongs to the N-acetylglucosamine-1-phosphate uridyltransferase family.</text>
</comment>
<comment type="similarity">
    <text evidence="1">In the C-terminal section; belongs to the transferase hexapeptide repeat family.</text>
</comment>
<organism>
    <name type="scientific">Streptococcus thermophilus (strain CNRZ 1066)</name>
    <dbReference type="NCBI Taxonomy" id="299768"/>
    <lineage>
        <taxon>Bacteria</taxon>
        <taxon>Bacillati</taxon>
        <taxon>Bacillota</taxon>
        <taxon>Bacilli</taxon>
        <taxon>Lactobacillales</taxon>
        <taxon>Streptococcaceae</taxon>
        <taxon>Streptococcus</taxon>
    </lineage>
</organism>
<feature type="chain" id="PRO_0000233858" description="Bifunctional protein GlmU">
    <location>
        <begin position="1"/>
        <end position="460"/>
    </location>
</feature>
<feature type="region of interest" description="Pyrophosphorylase" evidence="1">
    <location>
        <begin position="1"/>
        <end position="229"/>
    </location>
</feature>
<feature type="region of interest" description="Linker" evidence="1">
    <location>
        <begin position="230"/>
        <end position="250"/>
    </location>
</feature>
<feature type="region of interest" description="N-acetyltransferase" evidence="1">
    <location>
        <begin position="251"/>
        <end position="460"/>
    </location>
</feature>
<feature type="active site" description="Proton acceptor" evidence="1">
    <location>
        <position position="362"/>
    </location>
</feature>
<feature type="binding site" evidence="1">
    <location>
        <begin position="8"/>
        <end position="11"/>
    </location>
    <ligand>
        <name>UDP-N-acetyl-alpha-D-glucosamine</name>
        <dbReference type="ChEBI" id="CHEBI:57705"/>
    </ligand>
</feature>
<feature type="binding site" evidence="1">
    <location>
        <position position="22"/>
    </location>
    <ligand>
        <name>UDP-N-acetyl-alpha-D-glucosamine</name>
        <dbReference type="ChEBI" id="CHEBI:57705"/>
    </ligand>
</feature>
<feature type="binding site" evidence="1">
    <location>
        <position position="72"/>
    </location>
    <ligand>
        <name>UDP-N-acetyl-alpha-D-glucosamine</name>
        <dbReference type="ChEBI" id="CHEBI:57705"/>
    </ligand>
</feature>
<feature type="binding site" evidence="1">
    <location>
        <begin position="77"/>
        <end position="78"/>
    </location>
    <ligand>
        <name>UDP-N-acetyl-alpha-D-glucosamine</name>
        <dbReference type="ChEBI" id="CHEBI:57705"/>
    </ligand>
</feature>
<feature type="binding site" evidence="1">
    <location>
        <position position="102"/>
    </location>
    <ligand>
        <name>Mg(2+)</name>
        <dbReference type="ChEBI" id="CHEBI:18420"/>
    </ligand>
</feature>
<feature type="binding site" evidence="1">
    <location>
        <position position="139"/>
    </location>
    <ligand>
        <name>UDP-N-acetyl-alpha-D-glucosamine</name>
        <dbReference type="ChEBI" id="CHEBI:57705"/>
    </ligand>
</feature>
<feature type="binding site" evidence="1">
    <location>
        <position position="154"/>
    </location>
    <ligand>
        <name>UDP-N-acetyl-alpha-D-glucosamine</name>
        <dbReference type="ChEBI" id="CHEBI:57705"/>
    </ligand>
</feature>
<feature type="binding site" evidence="1">
    <location>
        <position position="169"/>
    </location>
    <ligand>
        <name>UDP-N-acetyl-alpha-D-glucosamine</name>
        <dbReference type="ChEBI" id="CHEBI:57705"/>
    </ligand>
</feature>
<feature type="binding site" evidence="1">
    <location>
        <position position="227"/>
    </location>
    <ligand>
        <name>Mg(2+)</name>
        <dbReference type="ChEBI" id="CHEBI:18420"/>
    </ligand>
</feature>
<feature type="binding site" evidence="1">
    <location>
        <position position="227"/>
    </location>
    <ligand>
        <name>UDP-N-acetyl-alpha-D-glucosamine</name>
        <dbReference type="ChEBI" id="CHEBI:57705"/>
    </ligand>
</feature>
<feature type="binding site" evidence="1">
    <location>
        <position position="332"/>
    </location>
    <ligand>
        <name>UDP-N-acetyl-alpha-D-glucosamine</name>
        <dbReference type="ChEBI" id="CHEBI:57705"/>
    </ligand>
</feature>
<feature type="binding site" evidence="1">
    <location>
        <position position="350"/>
    </location>
    <ligand>
        <name>UDP-N-acetyl-alpha-D-glucosamine</name>
        <dbReference type="ChEBI" id="CHEBI:57705"/>
    </ligand>
</feature>
<feature type="binding site" evidence="1">
    <location>
        <position position="365"/>
    </location>
    <ligand>
        <name>UDP-N-acetyl-alpha-D-glucosamine</name>
        <dbReference type="ChEBI" id="CHEBI:57705"/>
    </ligand>
</feature>
<feature type="binding site" evidence="1">
    <location>
        <position position="376"/>
    </location>
    <ligand>
        <name>UDP-N-acetyl-alpha-D-glucosamine</name>
        <dbReference type="ChEBI" id="CHEBI:57705"/>
    </ligand>
</feature>
<feature type="binding site" evidence="1">
    <location>
        <position position="379"/>
    </location>
    <ligand>
        <name>acetyl-CoA</name>
        <dbReference type="ChEBI" id="CHEBI:57288"/>
    </ligand>
</feature>
<feature type="binding site" evidence="1">
    <location>
        <begin position="385"/>
        <end position="386"/>
    </location>
    <ligand>
        <name>acetyl-CoA</name>
        <dbReference type="ChEBI" id="CHEBI:57288"/>
    </ligand>
</feature>
<feature type="binding site" evidence="1">
    <location>
        <position position="404"/>
    </location>
    <ligand>
        <name>acetyl-CoA</name>
        <dbReference type="ChEBI" id="CHEBI:57288"/>
    </ligand>
</feature>
<feature type="binding site" evidence="1">
    <location>
        <position position="422"/>
    </location>
    <ligand>
        <name>acetyl-CoA</name>
        <dbReference type="ChEBI" id="CHEBI:57288"/>
    </ligand>
</feature>
<feature type="binding site" evidence="1">
    <location>
        <position position="439"/>
    </location>
    <ligand>
        <name>acetyl-CoA</name>
        <dbReference type="ChEBI" id="CHEBI:57288"/>
    </ligand>
</feature>
<keyword id="KW-0012">Acyltransferase</keyword>
<keyword id="KW-0133">Cell shape</keyword>
<keyword id="KW-0961">Cell wall biogenesis/degradation</keyword>
<keyword id="KW-0963">Cytoplasm</keyword>
<keyword id="KW-0460">Magnesium</keyword>
<keyword id="KW-0479">Metal-binding</keyword>
<keyword id="KW-0511">Multifunctional enzyme</keyword>
<keyword id="KW-0548">Nucleotidyltransferase</keyword>
<keyword id="KW-0573">Peptidoglycan synthesis</keyword>
<keyword id="KW-0677">Repeat</keyword>
<keyword id="KW-0808">Transferase</keyword>
<protein>
    <recommendedName>
        <fullName evidence="1">Bifunctional protein GlmU</fullName>
    </recommendedName>
    <domain>
        <recommendedName>
            <fullName evidence="1">UDP-N-acetylglucosamine pyrophosphorylase</fullName>
            <ecNumber evidence="1">2.7.7.23</ecNumber>
        </recommendedName>
        <alternativeName>
            <fullName evidence="1">N-acetylglucosamine-1-phosphate uridyltransferase</fullName>
        </alternativeName>
    </domain>
    <domain>
        <recommendedName>
            <fullName evidence="1">Glucosamine-1-phosphate N-acetyltransferase</fullName>
            <ecNumber evidence="1">2.3.1.157</ecNumber>
        </recommendedName>
    </domain>
</protein>
<accession>Q5M0U2</accession>
<name>GLMU_STRT1</name>
<evidence type="ECO:0000255" key="1">
    <source>
        <dbReference type="HAMAP-Rule" id="MF_01631"/>
    </source>
</evidence>
<reference key="1">
    <citation type="journal article" date="2004" name="Nat. Biotechnol.">
        <title>Complete sequence and comparative genome analysis of the dairy bacterium Streptococcus thermophilus.</title>
        <authorList>
            <person name="Bolotin A."/>
            <person name="Quinquis B."/>
            <person name="Renault P."/>
            <person name="Sorokin A."/>
            <person name="Ehrlich S.D."/>
            <person name="Kulakauskas S."/>
            <person name="Lapidus A."/>
            <person name="Goltsman E."/>
            <person name="Mazur M."/>
            <person name="Pusch G.D."/>
            <person name="Fonstein M."/>
            <person name="Overbeek R."/>
            <person name="Kyprides N."/>
            <person name="Purnelle B."/>
            <person name="Prozzi D."/>
            <person name="Ngui K."/>
            <person name="Masuy D."/>
            <person name="Hancy F."/>
            <person name="Burteau S."/>
            <person name="Boutry M."/>
            <person name="Delcour J."/>
            <person name="Goffeau A."/>
            <person name="Hols P."/>
        </authorList>
    </citation>
    <scope>NUCLEOTIDE SEQUENCE [LARGE SCALE GENOMIC DNA]</scope>
    <source>
        <strain>CNRZ 1066</strain>
    </source>
</reference>
<proteinExistence type="inferred from homology"/>
<dbReference type="EC" id="2.7.7.23" evidence="1"/>
<dbReference type="EC" id="2.3.1.157" evidence="1"/>
<dbReference type="EMBL" id="CP000024">
    <property type="protein sequence ID" value="AAV62159.1"/>
    <property type="molecule type" value="Genomic_DNA"/>
</dbReference>
<dbReference type="RefSeq" id="WP_011226982.1">
    <property type="nucleotide sequence ID" value="NC_006449.1"/>
</dbReference>
<dbReference type="SMR" id="Q5M0U2"/>
<dbReference type="KEGG" id="stc:str0563"/>
<dbReference type="HOGENOM" id="CLU_029499_15_2_9"/>
<dbReference type="UniPathway" id="UPA00113">
    <property type="reaction ID" value="UER00532"/>
</dbReference>
<dbReference type="UniPathway" id="UPA00113">
    <property type="reaction ID" value="UER00533"/>
</dbReference>
<dbReference type="UniPathway" id="UPA00973"/>
<dbReference type="GO" id="GO:0005737">
    <property type="term" value="C:cytoplasm"/>
    <property type="evidence" value="ECO:0007669"/>
    <property type="project" value="UniProtKB-SubCell"/>
</dbReference>
<dbReference type="GO" id="GO:0016020">
    <property type="term" value="C:membrane"/>
    <property type="evidence" value="ECO:0007669"/>
    <property type="project" value="GOC"/>
</dbReference>
<dbReference type="GO" id="GO:0019134">
    <property type="term" value="F:glucosamine-1-phosphate N-acetyltransferase activity"/>
    <property type="evidence" value="ECO:0007669"/>
    <property type="project" value="UniProtKB-UniRule"/>
</dbReference>
<dbReference type="GO" id="GO:0000287">
    <property type="term" value="F:magnesium ion binding"/>
    <property type="evidence" value="ECO:0007669"/>
    <property type="project" value="UniProtKB-UniRule"/>
</dbReference>
<dbReference type="GO" id="GO:0003977">
    <property type="term" value="F:UDP-N-acetylglucosamine diphosphorylase activity"/>
    <property type="evidence" value="ECO:0007669"/>
    <property type="project" value="UniProtKB-UniRule"/>
</dbReference>
<dbReference type="GO" id="GO:0000902">
    <property type="term" value="P:cell morphogenesis"/>
    <property type="evidence" value="ECO:0007669"/>
    <property type="project" value="UniProtKB-UniRule"/>
</dbReference>
<dbReference type="GO" id="GO:0071555">
    <property type="term" value="P:cell wall organization"/>
    <property type="evidence" value="ECO:0007669"/>
    <property type="project" value="UniProtKB-KW"/>
</dbReference>
<dbReference type="GO" id="GO:0009245">
    <property type="term" value="P:lipid A biosynthetic process"/>
    <property type="evidence" value="ECO:0007669"/>
    <property type="project" value="UniProtKB-UniRule"/>
</dbReference>
<dbReference type="GO" id="GO:0009252">
    <property type="term" value="P:peptidoglycan biosynthetic process"/>
    <property type="evidence" value="ECO:0007669"/>
    <property type="project" value="UniProtKB-UniRule"/>
</dbReference>
<dbReference type="GO" id="GO:0008360">
    <property type="term" value="P:regulation of cell shape"/>
    <property type="evidence" value="ECO:0007669"/>
    <property type="project" value="UniProtKB-KW"/>
</dbReference>
<dbReference type="GO" id="GO:0006048">
    <property type="term" value="P:UDP-N-acetylglucosamine biosynthetic process"/>
    <property type="evidence" value="ECO:0007669"/>
    <property type="project" value="UniProtKB-UniPathway"/>
</dbReference>
<dbReference type="CDD" id="cd02540">
    <property type="entry name" value="GT2_GlmU_N_bac"/>
    <property type="match status" value="1"/>
</dbReference>
<dbReference type="CDD" id="cd03353">
    <property type="entry name" value="LbH_GlmU_C"/>
    <property type="match status" value="1"/>
</dbReference>
<dbReference type="Gene3D" id="2.160.10.10">
    <property type="entry name" value="Hexapeptide repeat proteins"/>
    <property type="match status" value="1"/>
</dbReference>
<dbReference type="Gene3D" id="3.90.550.10">
    <property type="entry name" value="Spore Coat Polysaccharide Biosynthesis Protein SpsA, Chain A"/>
    <property type="match status" value="1"/>
</dbReference>
<dbReference type="HAMAP" id="MF_01631">
    <property type="entry name" value="GlmU"/>
    <property type="match status" value="1"/>
</dbReference>
<dbReference type="InterPro" id="IPR005882">
    <property type="entry name" value="Bifunctional_GlmU"/>
</dbReference>
<dbReference type="InterPro" id="IPR050065">
    <property type="entry name" value="GlmU-like"/>
</dbReference>
<dbReference type="InterPro" id="IPR056818">
    <property type="entry name" value="GlmU/GlgC-like_hexapep"/>
</dbReference>
<dbReference type="InterPro" id="IPR038009">
    <property type="entry name" value="GlmU_C_LbH"/>
</dbReference>
<dbReference type="InterPro" id="IPR001451">
    <property type="entry name" value="Hexapep"/>
</dbReference>
<dbReference type="InterPro" id="IPR005835">
    <property type="entry name" value="NTP_transferase_dom"/>
</dbReference>
<dbReference type="InterPro" id="IPR029044">
    <property type="entry name" value="Nucleotide-diphossugar_trans"/>
</dbReference>
<dbReference type="InterPro" id="IPR011004">
    <property type="entry name" value="Trimer_LpxA-like_sf"/>
</dbReference>
<dbReference type="NCBIfam" id="TIGR01173">
    <property type="entry name" value="glmU"/>
    <property type="match status" value="1"/>
</dbReference>
<dbReference type="NCBIfam" id="NF010934">
    <property type="entry name" value="PRK14354.1"/>
    <property type="match status" value="1"/>
</dbReference>
<dbReference type="PANTHER" id="PTHR43584:SF3">
    <property type="entry name" value="BIFUNCTIONAL PROTEIN GLMU"/>
    <property type="match status" value="1"/>
</dbReference>
<dbReference type="PANTHER" id="PTHR43584">
    <property type="entry name" value="NUCLEOTIDYL TRANSFERASE"/>
    <property type="match status" value="1"/>
</dbReference>
<dbReference type="Pfam" id="PF00132">
    <property type="entry name" value="Hexapep"/>
    <property type="match status" value="1"/>
</dbReference>
<dbReference type="Pfam" id="PF24894">
    <property type="entry name" value="Hexapep_GlmU"/>
    <property type="match status" value="1"/>
</dbReference>
<dbReference type="Pfam" id="PF00483">
    <property type="entry name" value="NTP_transferase"/>
    <property type="match status" value="1"/>
</dbReference>
<dbReference type="SUPFAM" id="SSF53448">
    <property type="entry name" value="Nucleotide-diphospho-sugar transferases"/>
    <property type="match status" value="1"/>
</dbReference>
<dbReference type="SUPFAM" id="SSF51161">
    <property type="entry name" value="Trimeric LpxA-like enzymes"/>
    <property type="match status" value="1"/>
</dbReference>